<name>DEOB_RHIJ3</name>
<feature type="chain" id="PRO_0000258300" description="Phosphopentomutase">
    <location>
        <begin position="1"/>
        <end position="406"/>
    </location>
</feature>
<feature type="binding site" evidence="1">
    <location>
        <position position="10"/>
    </location>
    <ligand>
        <name>Mn(2+)</name>
        <dbReference type="ChEBI" id="CHEBI:29035"/>
        <label>1</label>
    </ligand>
</feature>
<feature type="binding site" evidence="1">
    <location>
        <position position="305"/>
    </location>
    <ligand>
        <name>Mn(2+)</name>
        <dbReference type="ChEBI" id="CHEBI:29035"/>
        <label>2</label>
    </ligand>
</feature>
<feature type="binding site" evidence="1">
    <location>
        <position position="310"/>
    </location>
    <ligand>
        <name>Mn(2+)</name>
        <dbReference type="ChEBI" id="CHEBI:29035"/>
        <label>2</label>
    </ligand>
</feature>
<feature type="binding site" evidence="1">
    <location>
        <position position="346"/>
    </location>
    <ligand>
        <name>Mn(2+)</name>
        <dbReference type="ChEBI" id="CHEBI:29035"/>
        <label>1</label>
    </ligand>
</feature>
<feature type="binding site" evidence="1">
    <location>
        <position position="347"/>
    </location>
    <ligand>
        <name>Mn(2+)</name>
        <dbReference type="ChEBI" id="CHEBI:29035"/>
        <label>1</label>
    </ligand>
</feature>
<feature type="binding site" evidence="1">
    <location>
        <position position="358"/>
    </location>
    <ligand>
        <name>Mn(2+)</name>
        <dbReference type="ChEBI" id="CHEBI:29035"/>
        <label>2</label>
    </ligand>
</feature>
<accession>Q1MMV6</accession>
<keyword id="KW-0963">Cytoplasm</keyword>
<keyword id="KW-0413">Isomerase</keyword>
<keyword id="KW-0464">Manganese</keyword>
<keyword id="KW-0479">Metal-binding</keyword>
<dbReference type="EC" id="5.4.2.7" evidence="1"/>
<dbReference type="EMBL" id="AM236080">
    <property type="protein sequence ID" value="CAK05696.1"/>
    <property type="molecule type" value="Genomic_DNA"/>
</dbReference>
<dbReference type="RefSeq" id="WP_011650018.1">
    <property type="nucleotide sequence ID" value="NC_008380.1"/>
</dbReference>
<dbReference type="SMR" id="Q1MMV6"/>
<dbReference type="EnsemblBacteria" id="CAK05696">
    <property type="protein sequence ID" value="CAK05696"/>
    <property type="gene ID" value="RL0207"/>
</dbReference>
<dbReference type="KEGG" id="rle:RL0207"/>
<dbReference type="eggNOG" id="COG1015">
    <property type="taxonomic scope" value="Bacteria"/>
</dbReference>
<dbReference type="HOGENOM" id="CLU_053861_0_0_5"/>
<dbReference type="UniPathway" id="UPA00002">
    <property type="reaction ID" value="UER00467"/>
</dbReference>
<dbReference type="Proteomes" id="UP000006575">
    <property type="component" value="Chromosome"/>
</dbReference>
<dbReference type="GO" id="GO:0005829">
    <property type="term" value="C:cytosol"/>
    <property type="evidence" value="ECO:0007669"/>
    <property type="project" value="TreeGrafter"/>
</dbReference>
<dbReference type="GO" id="GO:0000287">
    <property type="term" value="F:magnesium ion binding"/>
    <property type="evidence" value="ECO:0007669"/>
    <property type="project" value="InterPro"/>
</dbReference>
<dbReference type="GO" id="GO:0030145">
    <property type="term" value="F:manganese ion binding"/>
    <property type="evidence" value="ECO:0007669"/>
    <property type="project" value="UniProtKB-UniRule"/>
</dbReference>
<dbReference type="GO" id="GO:0008973">
    <property type="term" value="F:phosphopentomutase activity"/>
    <property type="evidence" value="ECO:0007669"/>
    <property type="project" value="UniProtKB-UniRule"/>
</dbReference>
<dbReference type="GO" id="GO:0006018">
    <property type="term" value="P:2-deoxyribose 1-phosphate catabolic process"/>
    <property type="evidence" value="ECO:0007669"/>
    <property type="project" value="UniProtKB-UniRule"/>
</dbReference>
<dbReference type="GO" id="GO:0006015">
    <property type="term" value="P:5-phosphoribose 1-diphosphate biosynthetic process"/>
    <property type="evidence" value="ECO:0007669"/>
    <property type="project" value="UniProtKB-UniPathway"/>
</dbReference>
<dbReference type="GO" id="GO:0043094">
    <property type="term" value="P:metabolic compound salvage"/>
    <property type="evidence" value="ECO:0007669"/>
    <property type="project" value="InterPro"/>
</dbReference>
<dbReference type="GO" id="GO:0009117">
    <property type="term" value="P:nucleotide metabolic process"/>
    <property type="evidence" value="ECO:0007669"/>
    <property type="project" value="InterPro"/>
</dbReference>
<dbReference type="CDD" id="cd16009">
    <property type="entry name" value="PPM"/>
    <property type="match status" value="1"/>
</dbReference>
<dbReference type="FunFam" id="3.30.70.1250:FF:000001">
    <property type="entry name" value="Phosphopentomutase"/>
    <property type="match status" value="1"/>
</dbReference>
<dbReference type="Gene3D" id="3.40.720.10">
    <property type="entry name" value="Alkaline Phosphatase, subunit A"/>
    <property type="match status" value="1"/>
</dbReference>
<dbReference type="Gene3D" id="3.30.70.1250">
    <property type="entry name" value="Phosphopentomutase"/>
    <property type="match status" value="1"/>
</dbReference>
<dbReference type="HAMAP" id="MF_00740">
    <property type="entry name" value="Phosphopentomut"/>
    <property type="match status" value="1"/>
</dbReference>
<dbReference type="InterPro" id="IPR017850">
    <property type="entry name" value="Alkaline_phosphatase_core_sf"/>
</dbReference>
<dbReference type="InterPro" id="IPR010045">
    <property type="entry name" value="DeoB"/>
</dbReference>
<dbReference type="InterPro" id="IPR006124">
    <property type="entry name" value="Metalloenzyme"/>
</dbReference>
<dbReference type="InterPro" id="IPR024052">
    <property type="entry name" value="Phosphopentomutase_DeoB_cap_sf"/>
</dbReference>
<dbReference type="NCBIfam" id="TIGR01696">
    <property type="entry name" value="deoB"/>
    <property type="match status" value="1"/>
</dbReference>
<dbReference type="NCBIfam" id="NF003766">
    <property type="entry name" value="PRK05362.1"/>
    <property type="match status" value="1"/>
</dbReference>
<dbReference type="PANTHER" id="PTHR21110">
    <property type="entry name" value="PHOSPHOPENTOMUTASE"/>
    <property type="match status" value="1"/>
</dbReference>
<dbReference type="PANTHER" id="PTHR21110:SF0">
    <property type="entry name" value="PHOSPHOPENTOMUTASE"/>
    <property type="match status" value="1"/>
</dbReference>
<dbReference type="Pfam" id="PF01676">
    <property type="entry name" value="Metalloenzyme"/>
    <property type="match status" value="1"/>
</dbReference>
<dbReference type="PIRSF" id="PIRSF001491">
    <property type="entry name" value="Ppentomutase"/>
    <property type="match status" value="1"/>
</dbReference>
<dbReference type="SUPFAM" id="SSF53649">
    <property type="entry name" value="Alkaline phosphatase-like"/>
    <property type="match status" value="1"/>
</dbReference>
<dbReference type="SUPFAM" id="SSF143856">
    <property type="entry name" value="DeoB insert domain-like"/>
    <property type="match status" value="1"/>
</dbReference>
<proteinExistence type="inferred from homology"/>
<evidence type="ECO:0000255" key="1">
    <source>
        <dbReference type="HAMAP-Rule" id="MF_00740"/>
    </source>
</evidence>
<protein>
    <recommendedName>
        <fullName evidence="1">Phosphopentomutase</fullName>
        <ecNumber evidence="1">5.4.2.7</ecNumber>
    </recommendedName>
    <alternativeName>
        <fullName evidence="1">Phosphodeoxyribomutase</fullName>
    </alternativeName>
</protein>
<comment type="function">
    <text evidence="1">Isomerase that catalyzes the conversion of deoxy-ribose 1-phosphate (dRib-1-P) and ribose 1-phosphate (Rib-1-P) to deoxy-ribose 5-phosphate (dRib-5-P) and ribose 5-phosphate (Rib-5-P), respectively.</text>
</comment>
<comment type="catalytic activity">
    <reaction evidence="1">
        <text>2-deoxy-alpha-D-ribose 1-phosphate = 2-deoxy-D-ribose 5-phosphate</text>
        <dbReference type="Rhea" id="RHEA:27658"/>
        <dbReference type="ChEBI" id="CHEBI:57259"/>
        <dbReference type="ChEBI" id="CHEBI:62877"/>
        <dbReference type="EC" id="5.4.2.7"/>
    </reaction>
</comment>
<comment type="catalytic activity">
    <reaction evidence="1">
        <text>alpha-D-ribose 1-phosphate = D-ribose 5-phosphate</text>
        <dbReference type="Rhea" id="RHEA:18793"/>
        <dbReference type="ChEBI" id="CHEBI:57720"/>
        <dbReference type="ChEBI" id="CHEBI:78346"/>
        <dbReference type="EC" id="5.4.2.7"/>
    </reaction>
</comment>
<comment type="cofactor">
    <cofactor evidence="1">
        <name>Mn(2+)</name>
        <dbReference type="ChEBI" id="CHEBI:29035"/>
    </cofactor>
    <text evidence="1">Binds 2 manganese ions.</text>
</comment>
<comment type="pathway">
    <text evidence="1">Carbohydrate degradation; 2-deoxy-D-ribose 1-phosphate degradation; D-glyceraldehyde 3-phosphate and acetaldehyde from 2-deoxy-alpha-D-ribose 1-phosphate: step 1/2.</text>
</comment>
<comment type="subcellular location">
    <subcellularLocation>
        <location evidence="1">Cytoplasm</location>
    </subcellularLocation>
</comment>
<comment type="similarity">
    <text evidence="1">Belongs to the phosphopentomutase family.</text>
</comment>
<gene>
    <name evidence="1" type="primary">deoB</name>
    <name type="ordered locus">RL0207</name>
</gene>
<organism>
    <name type="scientific">Rhizobium johnstonii (strain DSM 114642 / LMG 32736 / 3841)</name>
    <name type="common">Rhizobium leguminosarum bv. viciae</name>
    <dbReference type="NCBI Taxonomy" id="216596"/>
    <lineage>
        <taxon>Bacteria</taxon>
        <taxon>Pseudomonadati</taxon>
        <taxon>Pseudomonadota</taxon>
        <taxon>Alphaproteobacteria</taxon>
        <taxon>Hyphomicrobiales</taxon>
        <taxon>Rhizobiaceae</taxon>
        <taxon>Rhizobium/Agrobacterium group</taxon>
        <taxon>Rhizobium</taxon>
        <taxon>Rhizobium johnstonii</taxon>
    </lineage>
</organism>
<reference key="1">
    <citation type="journal article" date="2006" name="Genome Biol.">
        <title>The genome of Rhizobium leguminosarum has recognizable core and accessory components.</title>
        <authorList>
            <person name="Young J.P.W."/>
            <person name="Crossman L.C."/>
            <person name="Johnston A.W.B."/>
            <person name="Thomson N.R."/>
            <person name="Ghazoui Z.F."/>
            <person name="Hull K.H."/>
            <person name="Wexler M."/>
            <person name="Curson A.R.J."/>
            <person name="Todd J.D."/>
            <person name="Poole P.S."/>
            <person name="Mauchline T.H."/>
            <person name="East A.K."/>
            <person name="Quail M.A."/>
            <person name="Churcher C."/>
            <person name="Arrowsmith C."/>
            <person name="Cherevach I."/>
            <person name="Chillingworth T."/>
            <person name="Clarke K."/>
            <person name="Cronin A."/>
            <person name="Davis P."/>
            <person name="Fraser A."/>
            <person name="Hance Z."/>
            <person name="Hauser H."/>
            <person name="Jagels K."/>
            <person name="Moule S."/>
            <person name="Mungall K."/>
            <person name="Norbertczak H."/>
            <person name="Rabbinowitsch E."/>
            <person name="Sanders M."/>
            <person name="Simmonds M."/>
            <person name="Whitehead S."/>
            <person name="Parkhill J."/>
        </authorList>
    </citation>
    <scope>NUCLEOTIDE SEQUENCE [LARGE SCALE GENOMIC DNA]</scope>
    <source>
        <strain>DSM 114642 / LMG 32736 / 3841</strain>
    </source>
</reference>
<sequence length="406" mass="43517">MARAFLFVLDSFGVGGAPDAAAYGDEGADTLGHIAEFCAAGAADRAGLREGPLSLPNMSELGLMQIARSASGRFPAGMPVPEKVYGIYGAATEISRGKDTPSGHWEIAGTPVSFDWGYFPIEGDAFPQEFIEALCREADVPGILGNCHASGTEIIARLGEEHIRTGKPICYTSSDSVFQVAAHEVHFGLDRLLAFCGLARGLLDSYNIGRVIARPFIGQSASTFQRTGNRRDFSVLPPEPTLLDRLIEQGRHVHAVGKIGDIFAHQGISRVIKANGNEALMDASLSAIDAAEDGDLVFTNFVDFDMIYGHRRDVPGYAAALEAFDARLPDVHKKLKPGDLVVLTADHGCDPTWRGTDHTRERVPVIAYGPGIRSRSIGVRRGYADIGESIARHLGIPAGPHGRSFL</sequence>